<protein>
    <recommendedName>
        <fullName evidence="1">Arginine--tRNA ligase</fullName>
        <ecNumber evidence="1">6.1.1.19</ecNumber>
    </recommendedName>
    <alternativeName>
        <fullName evidence="1">Arginyl-tRNA synthetase</fullName>
        <shortName evidence="1">ArgRS</shortName>
    </alternativeName>
</protein>
<keyword id="KW-0030">Aminoacyl-tRNA synthetase</keyword>
<keyword id="KW-0067">ATP-binding</keyword>
<keyword id="KW-0963">Cytoplasm</keyword>
<keyword id="KW-0436">Ligase</keyword>
<keyword id="KW-0547">Nucleotide-binding</keyword>
<keyword id="KW-0648">Protein biosynthesis</keyword>
<name>SYR_CORGB</name>
<comment type="catalytic activity">
    <reaction evidence="1">
        <text>tRNA(Arg) + L-arginine + ATP = L-arginyl-tRNA(Arg) + AMP + diphosphate</text>
        <dbReference type="Rhea" id="RHEA:20301"/>
        <dbReference type="Rhea" id="RHEA-COMP:9658"/>
        <dbReference type="Rhea" id="RHEA-COMP:9673"/>
        <dbReference type="ChEBI" id="CHEBI:30616"/>
        <dbReference type="ChEBI" id="CHEBI:32682"/>
        <dbReference type="ChEBI" id="CHEBI:33019"/>
        <dbReference type="ChEBI" id="CHEBI:78442"/>
        <dbReference type="ChEBI" id="CHEBI:78513"/>
        <dbReference type="ChEBI" id="CHEBI:456215"/>
        <dbReference type="EC" id="6.1.1.19"/>
    </reaction>
</comment>
<comment type="subunit">
    <text evidence="1">Monomer.</text>
</comment>
<comment type="subcellular location">
    <subcellularLocation>
        <location evidence="1">Cytoplasm</location>
    </subcellularLocation>
</comment>
<comment type="similarity">
    <text evidence="1">Belongs to the class-I aminoacyl-tRNA synthetase family.</text>
</comment>
<dbReference type="EC" id="6.1.1.19" evidence="1"/>
<dbReference type="EMBL" id="AP009044">
    <property type="protein sequence ID" value="BAF54238.1"/>
    <property type="molecule type" value="Genomic_DNA"/>
</dbReference>
<dbReference type="RefSeq" id="WP_011897085.1">
    <property type="nucleotide sequence ID" value="NC_009342.1"/>
</dbReference>
<dbReference type="SMR" id="A4QDE1"/>
<dbReference type="KEGG" id="cgt:cgR_1259"/>
<dbReference type="HOGENOM" id="CLU_006406_0_1_11"/>
<dbReference type="PhylomeDB" id="A4QDE1"/>
<dbReference type="Proteomes" id="UP000006698">
    <property type="component" value="Chromosome"/>
</dbReference>
<dbReference type="GO" id="GO:0005737">
    <property type="term" value="C:cytoplasm"/>
    <property type="evidence" value="ECO:0007669"/>
    <property type="project" value="UniProtKB-SubCell"/>
</dbReference>
<dbReference type="GO" id="GO:0004814">
    <property type="term" value="F:arginine-tRNA ligase activity"/>
    <property type="evidence" value="ECO:0007669"/>
    <property type="project" value="UniProtKB-UniRule"/>
</dbReference>
<dbReference type="GO" id="GO:0005524">
    <property type="term" value="F:ATP binding"/>
    <property type="evidence" value="ECO:0007669"/>
    <property type="project" value="UniProtKB-UniRule"/>
</dbReference>
<dbReference type="GO" id="GO:0006420">
    <property type="term" value="P:arginyl-tRNA aminoacylation"/>
    <property type="evidence" value="ECO:0007669"/>
    <property type="project" value="UniProtKB-UniRule"/>
</dbReference>
<dbReference type="CDD" id="cd00671">
    <property type="entry name" value="ArgRS_core"/>
    <property type="match status" value="1"/>
</dbReference>
<dbReference type="FunFam" id="1.10.730.10:FF:000008">
    <property type="entry name" value="Arginine--tRNA ligase"/>
    <property type="match status" value="1"/>
</dbReference>
<dbReference type="FunFam" id="3.30.1360.70:FF:000003">
    <property type="entry name" value="Arginine--tRNA ligase"/>
    <property type="match status" value="1"/>
</dbReference>
<dbReference type="FunFam" id="3.40.50.620:FF:000062">
    <property type="entry name" value="Arginine--tRNA ligase"/>
    <property type="match status" value="1"/>
</dbReference>
<dbReference type="Gene3D" id="3.30.1360.70">
    <property type="entry name" value="Arginyl tRNA synthetase N-terminal domain"/>
    <property type="match status" value="1"/>
</dbReference>
<dbReference type="Gene3D" id="3.40.50.620">
    <property type="entry name" value="HUPs"/>
    <property type="match status" value="1"/>
</dbReference>
<dbReference type="Gene3D" id="1.10.730.10">
    <property type="entry name" value="Isoleucyl-tRNA Synthetase, Domain 1"/>
    <property type="match status" value="1"/>
</dbReference>
<dbReference type="HAMAP" id="MF_00123">
    <property type="entry name" value="Arg_tRNA_synth"/>
    <property type="match status" value="1"/>
</dbReference>
<dbReference type="InterPro" id="IPR001412">
    <property type="entry name" value="aa-tRNA-synth_I_CS"/>
</dbReference>
<dbReference type="InterPro" id="IPR001278">
    <property type="entry name" value="Arg-tRNA-ligase"/>
</dbReference>
<dbReference type="InterPro" id="IPR005148">
    <property type="entry name" value="Arg-tRNA-synth_N"/>
</dbReference>
<dbReference type="InterPro" id="IPR036695">
    <property type="entry name" value="Arg-tRNA-synth_N_sf"/>
</dbReference>
<dbReference type="InterPro" id="IPR035684">
    <property type="entry name" value="ArgRS_core"/>
</dbReference>
<dbReference type="InterPro" id="IPR008909">
    <property type="entry name" value="DALR_anticod-bd"/>
</dbReference>
<dbReference type="InterPro" id="IPR014729">
    <property type="entry name" value="Rossmann-like_a/b/a_fold"/>
</dbReference>
<dbReference type="InterPro" id="IPR009080">
    <property type="entry name" value="tRNAsynth_Ia_anticodon-bd"/>
</dbReference>
<dbReference type="NCBIfam" id="TIGR00456">
    <property type="entry name" value="argS"/>
    <property type="match status" value="1"/>
</dbReference>
<dbReference type="PANTHER" id="PTHR11956:SF5">
    <property type="entry name" value="ARGININE--TRNA LIGASE, CYTOPLASMIC"/>
    <property type="match status" value="1"/>
</dbReference>
<dbReference type="PANTHER" id="PTHR11956">
    <property type="entry name" value="ARGINYL-TRNA SYNTHETASE"/>
    <property type="match status" value="1"/>
</dbReference>
<dbReference type="Pfam" id="PF03485">
    <property type="entry name" value="Arg_tRNA_synt_N"/>
    <property type="match status" value="1"/>
</dbReference>
<dbReference type="Pfam" id="PF05746">
    <property type="entry name" value="DALR_1"/>
    <property type="match status" value="1"/>
</dbReference>
<dbReference type="Pfam" id="PF00750">
    <property type="entry name" value="tRNA-synt_1d"/>
    <property type="match status" value="1"/>
</dbReference>
<dbReference type="PRINTS" id="PR01038">
    <property type="entry name" value="TRNASYNTHARG"/>
</dbReference>
<dbReference type="SMART" id="SM01016">
    <property type="entry name" value="Arg_tRNA_synt_N"/>
    <property type="match status" value="1"/>
</dbReference>
<dbReference type="SMART" id="SM00836">
    <property type="entry name" value="DALR_1"/>
    <property type="match status" value="1"/>
</dbReference>
<dbReference type="SUPFAM" id="SSF47323">
    <property type="entry name" value="Anticodon-binding domain of a subclass of class I aminoacyl-tRNA synthetases"/>
    <property type="match status" value="1"/>
</dbReference>
<dbReference type="SUPFAM" id="SSF55190">
    <property type="entry name" value="Arginyl-tRNA synthetase (ArgRS), N-terminal 'additional' domain"/>
    <property type="match status" value="1"/>
</dbReference>
<dbReference type="SUPFAM" id="SSF52374">
    <property type="entry name" value="Nucleotidylyl transferase"/>
    <property type="match status" value="1"/>
</dbReference>
<dbReference type="PROSITE" id="PS00178">
    <property type="entry name" value="AA_TRNA_LIGASE_I"/>
    <property type="match status" value="1"/>
</dbReference>
<organism>
    <name type="scientific">Corynebacterium glutamicum (strain R)</name>
    <dbReference type="NCBI Taxonomy" id="340322"/>
    <lineage>
        <taxon>Bacteria</taxon>
        <taxon>Bacillati</taxon>
        <taxon>Actinomycetota</taxon>
        <taxon>Actinomycetes</taxon>
        <taxon>Mycobacteriales</taxon>
        <taxon>Corynebacteriaceae</taxon>
        <taxon>Corynebacterium</taxon>
    </lineage>
</organism>
<accession>A4QDE1</accession>
<feature type="chain" id="PRO_1000018019" description="Arginine--tRNA ligase">
    <location>
        <begin position="1"/>
        <end position="550"/>
    </location>
</feature>
<feature type="short sequence motif" description="'HIGH' region">
    <location>
        <begin position="130"/>
        <end position="140"/>
    </location>
</feature>
<sequence length="550" mass="59681">MTPADLATLIKETAVEVLTSRELDTSVLPEQVVVERPRNPEHGDYATNIALQVAKKVGQNPRDLATWLAEALAADDAIDSAEIAGPGFLNIRLAAAAQGEIVAKILAQGETFGNSDHLSHLDVNLEFVSANPTGPIHLGGTRWAAVGDSLGRVLEASGAKVTREYYFNDHGRQIDRFALSLLAAAKGEPTPEDGYGGEYIKEIAEAIVEKHPEALALEPAATQELFRAEGVEMMFEHIKSSLHEFGTDFDVYYHENSLFESGAVDKAVQVLKDNGNLYENEGAWWLRSTEFGDDKDRVVIKSDGDAAYIAGDIAYVADKFSRGHNLNIYMLGADHHGYIARLKAAAAALGYKPEGVEVLIGQMVNLLRDGKAVRMSKRAGTVVTLDDLVEAIGIDAARYSLIRSSVDSSLDIDLGLWESQSSDNPVYYVQYGHARLCSIARKAETLGVTEEGADLSLLTHDREGDLIRTLGEFPAVVKAAADLREPHRIARYAEELAGTFHRFYDSCHILPKADEDTAPIHSARLALAAATRQTLANALHLVGVSAPEKM</sequence>
<gene>
    <name evidence="1" type="primary">argS</name>
    <name type="ordered locus">cgR_1259</name>
</gene>
<evidence type="ECO:0000255" key="1">
    <source>
        <dbReference type="HAMAP-Rule" id="MF_00123"/>
    </source>
</evidence>
<proteinExistence type="inferred from homology"/>
<reference key="1">
    <citation type="journal article" date="2007" name="Microbiology">
        <title>Comparative analysis of the Corynebacterium glutamicum group and complete genome sequence of strain R.</title>
        <authorList>
            <person name="Yukawa H."/>
            <person name="Omumasaba C.A."/>
            <person name="Nonaka H."/>
            <person name="Kos P."/>
            <person name="Okai N."/>
            <person name="Suzuki N."/>
            <person name="Suda M."/>
            <person name="Tsuge Y."/>
            <person name="Watanabe J."/>
            <person name="Ikeda Y."/>
            <person name="Vertes A.A."/>
            <person name="Inui M."/>
        </authorList>
    </citation>
    <scope>NUCLEOTIDE SEQUENCE [LARGE SCALE GENOMIC DNA]</scope>
    <source>
        <strain>R</strain>
    </source>
</reference>